<keyword id="KW-0025">Alternative splicing</keyword>
<keyword id="KW-0067">ATP-binding</keyword>
<keyword id="KW-0175">Coiled coil</keyword>
<keyword id="KW-0963">Cytoplasm</keyword>
<keyword id="KW-0206">Cytoskeleton</keyword>
<keyword id="KW-0493">Microtubule</keyword>
<keyword id="KW-0505">Motor protein</keyword>
<keyword id="KW-0547">Nucleotide-binding</keyword>
<keyword id="KW-1185">Reference proteome</keyword>
<gene>
    <name evidence="7" type="primary">KIN5C</name>
    <name evidence="8 9" type="ordered locus">Os08g0558400</name>
    <name evidence="7" type="ordered locus">LOC_Os08g44420</name>
</gene>
<accession>B7EJ91</accession>
<accession>A0A0P0XIK4</accession>
<evidence type="ECO:0000250" key="1">
    <source>
        <dbReference type="UniProtKB" id="F4IIS5"/>
    </source>
</evidence>
<evidence type="ECO:0000250" key="2">
    <source>
        <dbReference type="UniProtKB" id="O23826"/>
    </source>
</evidence>
<evidence type="ECO:0000255" key="3"/>
<evidence type="ECO:0000255" key="4">
    <source>
        <dbReference type="PROSITE-ProRule" id="PRU00283"/>
    </source>
</evidence>
<evidence type="ECO:0000256" key="5">
    <source>
        <dbReference type="SAM" id="MobiDB-lite"/>
    </source>
</evidence>
<evidence type="ECO:0000303" key="6">
    <source>
    </source>
</evidence>
<evidence type="ECO:0000305" key="7"/>
<evidence type="ECO:0000312" key="8">
    <source>
        <dbReference type="EMBL" id="BAT06676.1"/>
    </source>
</evidence>
<evidence type="ECO:0000312" key="9">
    <source>
        <dbReference type="EMBL" id="BAT06677.1"/>
    </source>
</evidence>
<proteinExistence type="evidence at transcript level"/>
<sequence>MSSRQDKEKSVNVQVLLRCRPFSDDEVRSNAPQVITCNDYQREVAVTQTIAGKQIDRVFTFDKVFGPTAKQRDLYDQAIIPIVNEVLEGFNCTIFAYGQTGTGKTYTMEGECRRAKSGPKGQLPADAGVIPRAVKQIFDTLESQNTEYSVKVTFLELYNEEITDLLAPEEISKAALEERQKKPLPLMEDGKGGVLVRGLEEEIVTNASEIFSLLERGSAKRRTAETLLNKQSSRSHSLFSITIHIKEATPEGEELIKCGKLNLVDLAGSENISRSGAREGRAREAGEINKSLLTLGRVITALVEHLGHVPYRDSKLTRLLRDSLGGRTKTCIIATVSPSVHCLEETLSTLDYAHRAKSIKNRPEVNQKMMKSTLIKDLYGEIDRLKAEVYAAREKVGVYIPKDRYQQEENERKAMADQIEQMTTSLEANQKQINDLQEKYDSELQHSADLSKKLEATEKCLDHTSNLLSTTKEDLKQAQYNLKEKDYIISEQRKAENALIQQACLLRSDLEKSNRENAALYSKIARGDKLNAANRSVVNSFQADLASKLDILSTTLATSIDQQNKHLKSVENLCKSCVDSHDTATSEIKKKILASKALYMSHMEAFQNVVLLHKANSNSTLEDISSLSAASCCSLDQLLACVEGEAQKIFGDIQNLLADHRSEVAHFTQELRESFRISLDRTKDMSSFILGLFDKYVEETSKLQSHSNHTHEAQVKSLEDFQKAYEEQSKSEEQKLLADITSLVSKHVTRQRELVGGRLNSLGDAARGNKAFLDEHTSAMEVVTKDAKRKWEMFAEQAENDCKVGSNFSAAKHCRMETILQECACTVDTAAQQWKASHATVNDLCRKQIAEVEALVRSAIETNEQHEAEIASSRATAEEHASNSSKDLLQDVDNMLQEARNSSSRVVSTVEAHLGESQHLQESHSSHTAGINTHADNAFQSSYKDYEPTGETPVRSEPEVPSKDAIESLRAMPMESLMDEFRENHPYEPSKDRRPSLIPRSPLATINN</sequence>
<feature type="chain" id="PRO_0000436273" description="Kinesin-like protein KIN-5C">
    <location>
        <begin position="1"/>
        <end position="1008"/>
    </location>
</feature>
<feature type="domain" description="Kinesin motor" evidence="4">
    <location>
        <begin position="12"/>
        <end position="359"/>
    </location>
</feature>
<feature type="region of interest" description="Disordered" evidence="5">
    <location>
        <begin position="910"/>
        <end position="931"/>
    </location>
</feature>
<feature type="region of interest" description="Disordered" evidence="5">
    <location>
        <begin position="943"/>
        <end position="962"/>
    </location>
</feature>
<feature type="region of interest" description="Disordered" evidence="5">
    <location>
        <begin position="975"/>
        <end position="1008"/>
    </location>
</feature>
<feature type="coiled-coil region" evidence="3">
    <location>
        <begin position="402"/>
        <end position="459"/>
    </location>
</feature>
<feature type="compositionally biased region" description="Basic and acidic residues" evidence="5">
    <location>
        <begin position="913"/>
        <end position="925"/>
    </location>
</feature>
<feature type="compositionally biased region" description="Basic and acidic residues" evidence="5">
    <location>
        <begin position="979"/>
        <end position="995"/>
    </location>
</feature>
<feature type="binding site" evidence="4">
    <location>
        <begin position="98"/>
        <end position="105"/>
    </location>
    <ligand>
        <name>ATP</name>
        <dbReference type="ChEBI" id="CHEBI:30616"/>
    </ligand>
</feature>
<feature type="splice variant" id="VSP_058329" description="In isoform 2.">
    <location>
        <begin position="1"/>
        <end position="599"/>
    </location>
</feature>
<organism>
    <name type="scientific">Oryza sativa subsp. japonica</name>
    <name type="common">Rice</name>
    <dbReference type="NCBI Taxonomy" id="39947"/>
    <lineage>
        <taxon>Eukaryota</taxon>
        <taxon>Viridiplantae</taxon>
        <taxon>Streptophyta</taxon>
        <taxon>Embryophyta</taxon>
        <taxon>Tracheophyta</taxon>
        <taxon>Spermatophyta</taxon>
        <taxon>Magnoliopsida</taxon>
        <taxon>Liliopsida</taxon>
        <taxon>Poales</taxon>
        <taxon>Poaceae</taxon>
        <taxon>BOP clade</taxon>
        <taxon>Oryzoideae</taxon>
        <taxon>Oryzeae</taxon>
        <taxon>Oryzinae</taxon>
        <taxon>Oryza</taxon>
        <taxon>Oryza sativa</taxon>
    </lineage>
</organism>
<reference key="1">
    <citation type="journal article" date="2005" name="Nature">
        <title>The map-based sequence of the rice genome.</title>
        <authorList>
            <consortium name="International rice genome sequencing project (IRGSP)"/>
        </authorList>
    </citation>
    <scope>NUCLEOTIDE SEQUENCE [LARGE SCALE GENOMIC DNA]</scope>
    <source>
        <strain>cv. Nipponbare</strain>
    </source>
</reference>
<reference key="2">
    <citation type="journal article" date="2013" name="Rice">
        <title>Improvement of the Oryza sativa Nipponbare reference genome using next generation sequence and optical map data.</title>
        <authorList>
            <person name="Kawahara Y."/>
            <person name="de la Bastide M."/>
            <person name="Hamilton J.P."/>
            <person name="Kanamori H."/>
            <person name="McCombie W.R."/>
            <person name="Ouyang S."/>
            <person name="Schwartz D.C."/>
            <person name="Tanaka T."/>
            <person name="Wu J."/>
            <person name="Zhou S."/>
            <person name="Childs K.L."/>
            <person name="Davidson R.M."/>
            <person name="Lin H."/>
            <person name="Quesada-Ocampo L."/>
            <person name="Vaillancourt B."/>
            <person name="Sakai H."/>
            <person name="Lee S.S."/>
            <person name="Kim J."/>
            <person name="Numa H."/>
            <person name="Itoh T."/>
            <person name="Buell C.R."/>
            <person name="Matsumoto T."/>
        </authorList>
    </citation>
    <scope>GENOME REANNOTATION</scope>
    <source>
        <strain>cv. Nipponbare</strain>
    </source>
</reference>
<reference key="3">
    <citation type="journal article" date="2003" name="Science">
        <title>Collection, mapping, and annotation of over 28,000 cDNA clones from japonica rice.</title>
        <authorList>
            <consortium name="The rice full-length cDNA consortium"/>
        </authorList>
    </citation>
    <scope>NUCLEOTIDE SEQUENCE [LARGE SCALE MRNA] (ISOFORM 2)</scope>
    <source>
        <strain>cv. Nipponbare</strain>
    </source>
</reference>
<reference key="4">
    <citation type="journal article" date="2006" name="Trends Plant Sci.">
        <title>Mitosis-specific kinesins in Arabidopsis.</title>
        <authorList>
            <person name="Vanstraelen M."/>
            <person name="Inze D."/>
            <person name="Geelen D."/>
        </authorList>
    </citation>
    <scope>REVIEW</scope>
</reference>
<reference key="5">
    <citation type="journal article" date="2009" name="Ann. Bot.">
        <title>Evaluating the microtubule cytoskeleton and its interacting proteins in monocots by mining the rice genome.</title>
        <authorList>
            <person name="Guo L."/>
            <person name="Ho C.M."/>
            <person name="Kong Z."/>
            <person name="Lee Y.R."/>
            <person name="Qian Q."/>
            <person name="Liu B."/>
        </authorList>
    </citation>
    <scope>GENE FAMILY</scope>
    <scope>NOMENCLATURE</scope>
</reference>
<dbReference type="EMBL" id="AP014964">
    <property type="protein sequence ID" value="BAT06676.1"/>
    <property type="status" value="ALT_SEQ"/>
    <property type="molecule type" value="Genomic_DNA"/>
</dbReference>
<dbReference type="EMBL" id="AP014964">
    <property type="protein sequence ID" value="BAT06677.1"/>
    <property type="status" value="ALT_SEQ"/>
    <property type="molecule type" value="Genomic_DNA"/>
</dbReference>
<dbReference type="EMBL" id="AK071334">
    <property type="protein sequence ID" value="BAG92438.1"/>
    <property type="molecule type" value="mRNA"/>
</dbReference>
<dbReference type="RefSeq" id="XP_015649381.1">
    <property type="nucleotide sequence ID" value="XM_015793895.1"/>
</dbReference>
<dbReference type="SMR" id="B7EJ91"/>
<dbReference type="FunCoup" id="B7EJ91">
    <property type="interactions" value="1598"/>
</dbReference>
<dbReference type="STRING" id="39947.B7EJ91"/>
<dbReference type="PaxDb" id="39947-B7EJ91"/>
<dbReference type="eggNOG" id="KOG0243">
    <property type="taxonomic scope" value="Eukaryota"/>
</dbReference>
<dbReference type="HOGENOM" id="CLU_673343_0_0_1"/>
<dbReference type="InParanoid" id="B7EJ91"/>
<dbReference type="OrthoDB" id="3176171at2759"/>
<dbReference type="Proteomes" id="UP000059680">
    <property type="component" value="Chromosome 8"/>
</dbReference>
<dbReference type="GO" id="GO:0005737">
    <property type="term" value="C:cytoplasm"/>
    <property type="evidence" value="ECO:0007669"/>
    <property type="project" value="UniProtKB-KW"/>
</dbReference>
<dbReference type="GO" id="GO:0072686">
    <property type="term" value="C:mitotic spindle"/>
    <property type="evidence" value="ECO:0000318"/>
    <property type="project" value="GO_Central"/>
</dbReference>
<dbReference type="GO" id="GO:0005876">
    <property type="term" value="C:spindle microtubule"/>
    <property type="evidence" value="ECO:0000318"/>
    <property type="project" value="GO_Central"/>
</dbReference>
<dbReference type="GO" id="GO:0005524">
    <property type="term" value="F:ATP binding"/>
    <property type="evidence" value="ECO:0007669"/>
    <property type="project" value="UniProtKB-KW"/>
</dbReference>
<dbReference type="GO" id="GO:0008017">
    <property type="term" value="F:microtubule binding"/>
    <property type="evidence" value="ECO:0007669"/>
    <property type="project" value="InterPro"/>
</dbReference>
<dbReference type="GO" id="GO:0008574">
    <property type="term" value="F:plus-end-directed microtubule motor activity"/>
    <property type="evidence" value="ECO:0000318"/>
    <property type="project" value="GO_Central"/>
</dbReference>
<dbReference type="GO" id="GO:0007018">
    <property type="term" value="P:microtubule-based movement"/>
    <property type="evidence" value="ECO:0007669"/>
    <property type="project" value="InterPro"/>
</dbReference>
<dbReference type="GO" id="GO:0090307">
    <property type="term" value="P:mitotic spindle assembly"/>
    <property type="evidence" value="ECO:0000318"/>
    <property type="project" value="GO_Central"/>
</dbReference>
<dbReference type="GO" id="GO:0051231">
    <property type="term" value="P:spindle elongation"/>
    <property type="evidence" value="ECO:0000318"/>
    <property type="project" value="GO_Central"/>
</dbReference>
<dbReference type="CDD" id="cd01364">
    <property type="entry name" value="KISc_BimC_Eg5"/>
    <property type="match status" value="1"/>
</dbReference>
<dbReference type="FunFam" id="3.40.850.10:FF:000019">
    <property type="entry name" value="Kinesin-like protein KIN-5D"/>
    <property type="match status" value="1"/>
</dbReference>
<dbReference type="Gene3D" id="3.40.850.10">
    <property type="entry name" value="Kinesin motor domain"/>
    <property type="match status" value="1"/>
</dbReference>
<dbReference type="InterPro" id="IPR047149">
    <property type="entry name" value="KIF11-like"/>
</dbReference>
<dbReference type="InterPro" id="IPR047241">
    <property type="entry name" value="KIF11-like_kin_motor_dom"/>
</dbReference>
<dbReference type="InterPro" id="IPR019821">
    <property type="entry name" value="Kinesin_motor_CS"/>
</dbReference>
<dbReference type="InterPro" id="IPR001752">
    <property type="entry name" value="Kinesin_motor_dom"/>
</dbReference>
<dbReference type="InterPro" id="IPR036961">
    <property type="entry name" value="Kinesin_motor_dom_sf"/>
</dbReference>
<dbReference type="InterPro" id="IPR027417">
    <property type="entry name" value="P-loop_NTPase"/>
</dbReference>
<dbReference type="PANTHER" id="PTHR47970:SF12">
    <property type="entry name" value="KINESIN FAMILY MEMBER 11"/>
    <property type="match status" value="1"/>
</dbReference>
<dbReference type="PANTHER" id="PTHR47970">
    <property type="entry name" value="KINESIN-LIKE PROTEIN KIF11"/>
    <property type="match status" value="1"/>
</dbReference>
<dbReference type="Pfam" id="PF00225">
    <property type="entry name" value="Kinesin"/>
    <property type="match status" value="1"/>
</dbReference>
<dbReference type="PRINTS" id="PR00380">
    <property type="entry name" value="KINESINHEAVY"/>
</dbReference>
<dbReference type="SMART" id="SM00129">
    <property type="entry name" value="KISc"/>
    <property type="match status" value="1"/>
</dbReference>
<dbReference type="SUPFAM" id="SSF52540">
    <property type="entry name" value="P-loop containing nucleoside triphosphate hydrolases"/>
    <property type="match status" value="1"/>
</dbReference>
<dbReference type="PROSITE" id="PS00411">
    <property type="entry name" value="KINESIN_MOTOR_1"/>
    <property type="match status" value="1"/>
</dbReference>
<dbReference type="PROSITE" id="PS50067">
    <property type="entry name" value="KINESIN_MOTOR_2"/>
    <property type="match status" value="1"/>
</dbReference>
<comment type="function">
    <text evidence="1 2">Responsible for microtubule translocation. May be important for the organization of phragmoplast-specific arrays of microtubules (By similarity). Plays an essential role in stabilizing the mitotic spindle. Required during mitotic cytokinesis (By similarity).</text>
</comment>
<comment type="subcellular location">
    <subcellularLocation>
        <location evidence="1">Cytoplasm</location>
        <location evidence="1">Cytoskeleton</location>
    </subcellularLocation>
    <subcellularLocation>
        <location evidence="1">Cytoplasm</location>
        <location evidence="1">Cytoskeleton</location>
        <location evidence="1">Spindle</location>
    </subcellularLocation>
    <text evidence="1">Microtubule-associated.</text>
</comment>
<comment type="alternative products">
    <event type="alternative splicing"/>
    <isoform>
        <id>B7EJ91-1</id>
        <name>1</name>
        <sequence type="displayed"/>
    </isoform>
    <isoform>
        <id>B7EJ91-2</id>
        <name>2</name>
        <sequence type="described" ref="VSP_058329"/>
    </isoform>
</comment>
<comment type="miscellaneous">
    <molecule>Isoform 2</molecule>
    <text evidence="7">May be due to introns retention.</text>
</comment>
<comment type="similarity">
    <text evidence="6">Belongs to the TRAFAC class myosin-kinesin ATPase superfamily. Kinesin family. KIN-5/BimC subfamily.</text>
</comment>
<comment type="sequence caution" evidence="7">
    <conflict type="erroneous gene model prediction">
        <sequence resource="EMBL-CDS" id="BAT06676"/>
    </conflict>
</comment>
<comment type="sequence caution" evidence="7">
    <conflict type="erroneous gene model prediction">
        <sequence resource="EMBL-CDS" id="BAT06677"/>
    </conflict>
</comment>
<name>KN5C_ORYSJ</name>
<protein>
    <recommendedName>
        <fullName evidence="7">Kinesin-like protein KIN-5C</fullName>
    </recommendedName>
</protein>